<dbReference type="EMBL" id="AF110521">
    <property type="protein sequence ID" value="AAD29577.1"/>
    <property type="status" value="ALT_TERM"/>
    <property type="molecule type" value="mRNA"/>
</dbReference>
<dbReference type="EMBL" id="AB015729">
    <property type="protein sequence ID" value="BAA35074.1"/>
    <property type="molecule type" value="mRNA"/>
</dbReference>
<dbReference type="EMBL" id="AF158234">
    <property type="protein sequence ID" value="AAF14528.1"/>
    <property type="molecule type" value="Genomic_DNA"/>
</dbReference>
<dbReference type="EMBL" id="AF022820">
    <property type="protein sequence ID" value="AAD09337.1"/>
    <property type="molecule type" value="mRNA"/>
</dbReference>
<dbReference type="EMBL" id="AF012324">
    <property type="protein sequence ID" value="AAF21603.1"/>
    <property type="molecule type" value="mRNA"/>
</dbReference>
<dbReference type="RefSeq" id="NP_034739.2">
    <property type="nucleotide sequence ID" value="NM_010609.3"/>
</dbReference>
<dbReference type="SMR" id="Q9Z2T1"/>
<dbReference type="FunCoup" id="Q9Z2T1">
    <property type="interactions" value="53"/>
</dbReference>
<dbReference type="STRING" id="10090.ENSMUSP00000051278"/>
<dbReference type="GlyCosmos" id="Q9Z2T1">
    <property type="glycosylation" value="1 site, No reported glycans"/>
</dbReference>
<dbReference type="GlyGen" id="Q9Z2T1">
    <property type="glycosylation" value="2 sites"/>
</dbReference>
<dbReference type="PaxDb" id="10090-ENSMUSP00000051278"/>
<dbReference type="DNASU" id="16530"/>
<dbReference type="GeneID" id="16530"/>
<dbReference type="KEGG" id="mmu:16530"/>
<dbReference type="AGR" id="MGI:1341841"/>
<dbReference type="CTD" id="10089"/>
<dbReference type="MGI" id="MGI:1341841">
    <property type="gene designation" value="Kcnk7"/>
</dbReference>
<dbReference type="eggNOG" id="KOG1418">
    <property type="taxonomic scope" value="Eukaryota"/>
</dbReference>
<dbReference type="InParanoid" id="Q9Z2T1"/>
<dbReference type="OrthoDB" id="297496at2759"/>
<dbReference type="Reactome" id="R-MMU-1299308">
    <property type="pathway name" value="Tandem of pore domain in a weak inwardly rectifying K+ channels (TWIK)"/>
</dbReference>
<dbReference type="Reactome" id="R-MMU-5576886">
    <property type="pathway name" value="Phase 4 - resting membrane potential"/>
</dbReference>
<dbReference type="BioGRID-ORCS" id="16530">
    <property type="hits" value="1 hit in 75 CRISPR screens"/>
</dbReference>
<dbReference type="ChiTaRS" id="Kcnk6">
    <property type="organism name" value="mouse"/>
</dbReference>
<dbReference type="PRO" id="PR:Q9Z2T1"/>
<dbReference type="Proteomes" id="UP000000589">
    <property type="component" value="Unplaced"/>
</dbReference>
<dbReference type="RNAct" id="Q9Z2T1">
    <property type="molecule type" value="protein"/>
</dbReference>
<dbReference type="GO" id="GO:0034702">
    <property type="term" value="C:monoatomic ion channel complex"/>
    <property type="evidence" value="ECO:0007669"/>
    <property type="project" value="UniProtKB-KW"/>
</dbReference>
<dbReference type="GO" id="GO:0005886">
    <property type="term" value="C:plasma membrane"/>
    <property type="evidence" value="ECO:0000250"/>
    <property type="project" value="MGI"/>
</dbReference>
<dbReference type="GO" id="GO:0005267">
    <property type="term" value="F:potassium channel activity"/>
    <property type="evidence" value="ECO:0000250"/>
    <property type="project" value="MGI"/>
</dbReference>
<dbReference type="FunFam" id="1.10.287.70:FF:000154">
    <property type="entry name" value="Potassium channel subfamily K member 7"/>
    <property type="match status" value="1"/>
</dbReference>
<dbReference type="Gene3D" id="1.10.287.70">
    <property type="match status" value="1"/>
</dbReference>
<dbReference type="InterPro" id="IPR003280">
    <property type="entry name" value="2pore_dom_K_chnl"/>
</dbReference>
<dbReference type="InterPro" id="IPR003092">
    <property type="entry name" value="2pore_dom_K_chnl_TASK"/>
</dbReference>
<dbReference type="InterPro" id="IPR005408">
    <property type="entry name" value="2pore_dom_K_chnl_TWIK"/>
</dbReference>
<dbReference type="InterPro" id="IPR013099">
    <property type="entry name" value="K_chnl_dom"/>
</dbReference>
<dbReference type="PANTHER" id="PTHR11003:SF31">
    <property type="entry name" value="POTASSIUM CHANNEL SUBFAMILY K MEMBER 7"/>
    <property type="match status" value="1"/>
</dbReference>
<dbReference type="PANTHER" id="PTHR11003">
    <property type="entry name" value="POTASSIUM CHANNEL, SUBFAMILY K"/>
    <property type="match status" value="1"/>
</dbReference>
<dbReference type="Pfam" id="PF07885">
    <property type="entry name" value="Ion_trans_2"/>
    <property type="match status" value="2"/>
</dbReference>
<dbReference type="PIRSF" id="PIRSF038061">
    <property type="entry name" value="K_channel_subfamily_K_type"/>
    <property type="match status" value="1"/>
</dbReference>
<dbReference type="PRINTS" id="PR01333">
    <property type="entry name" value="2POREKCHANEL"/>
</dbReference>
<dbReference type="PRINTS" id="PR01586">
    <property type="entry name" value="TWIKCHANNEL"/>
</dbReference>
<dbReference type="SUPFAM" id="SSF81324">
    <property type="entry name" value="Voltage-gated potassium channels"/>
    <property type="match status" value="2"/>
</dbReference>
<sequence length="307" mass="32199">MGSLKPWARYLLLLMAHLLAMGLGAVVLQALEGPPARHLQAQVQAELASFQAEHRACLPPEALEELLGAVLRAQAHGVSSLGNSSETSNWDLPSALLFTASILTTTGYGHMAPLSSGGKAFCVVYAALGLPASLALVAALRHCLLPVFSRPGDWVAIRWQLAPAQAALLQAAGLGLLVACVFMLLPALVLWGVQGDCSLLEAIYFCFGSLSTIGLGDLLPAHGRGLHPAIYHLGQFALLGYLLLGLLAMLLAVETFSELPQVRAMVKFFGPSGSRTDEDQDGILGQDELALSTVLPDAPVLGPTTPA</sequence>
<name>KCNK7_MOUSE</name>
<comment type="function">
    <text>Probable potassium channel subunit. No channel activity observed in vitro as protein remains in the endoplasmic reticulum. May need to associate with an as yet unknown partner in order to reach the plasma membrane.</text>
</comment>
<comment type="subunit">
    <text evidence="2">Homodimer.</text>
</comment>
<comment type="subcellular location">
    <subcellularLocation>
        <location evidence="2">Membrane</location>
        <topology evidence="2">Multi-pass membrane protein</topology>
    </subcellularLocation>
</comment>
<comment type="tissue specificity">
    <text>Detected in embryo, eye, lung and liver. Weakly expressed in colon, testis, atria, kidney, intestine, bladder, uterus, ovary, salivary gland, thymus and brain stem. Not detected in brain, cerebellum, spinal cord, heart, ventricle, skeletal muscle, liver, placenta and pancreas. In the eye, highly expressed in the retinal ganglion cell layer and inner nuclear layer.</text>
</comment>
<comment type="similarity">
    <text evidence="2">Belongs to the two pore domain potassium channel (TC 1.A.1.8) family.</text>
</comment>
<reference key="1">
    <citation type="journal article" date="1999" name="J. Biol. Chem.">
        <title>Cloning of a new mouse two-P domain channel subunit and a human homologue with a unique pore structure.</title>
        <authorList>
            <person name="Salinas M."/>
            <person name="Reyes R."/>
            <person name="Lesage F."/>
            <person name="Fosset M."/>
            <person name="Heurteaux C."/>
            <person name="Romey G."/>
            <person name="Lazdunski M."/>
        </authorList>
    </citation>
    <scope>NUCLEOTIDE SEQUENCE [MRNA]</scope>
    <source>
        <tissue>Brain</tissue>
        <tissue>Lung</tissue>
    </source>
</reference>
<reference key="2">
    <citation type="submission" date="1998-06" db="EMBL/GenBank/DDBJ databases">
        <title>Cloning of a new double-pore K channel expressed predominantly in tesis.</title>
        <authorList>
            <person name="Ishibashi K."/>
            <person name="Suzuki M."/>
            <person name="Imai M."/>
        </authorList>
    </citation>
    <scope>NUCLEOTIDE SEQUENCE [MRNA]</scope>
</reference>
<reference key="3">
    <citation type="submission" date="1999-06" db="EMBL/GenBank/DDBJ databases">
        <title>Cloning, localization, and expression of the murine 2 P domain potassium channel KCNK6.</title>
        <authorList>
            <person name="Bockenhauer D."/>
            <person name="Nimmakayalu M.A."/>
            <person name="Ward D.C."/>
            <person name="Goldstein S.A.N."/>
            <person name="Gallagher P.G."/>
        </authorList>
    </citation>
    <scope>NUCLEOTIDE SEQUENCE OF 1-289</scope>
</reference>
<reference key="4">
    <citation type="submission" date="1997-09" db="EMBL/GenBank/DDBJ databases">
        <authorList>
            <person name="Gan L."/>
            <person name="Joiner W.J."/>
            <person name="Quinn A.M."/>
            <person name="Wang L.-Y."/>
            <person name="Hughes T."/>
            <person name="Kaczmarek L.K."/>
        </authorList>
    </citation>
    <scope>NUCLEOTIDE SEQUENCE OF 2-307</scope>
</reference>
<reference key="5">
    <citation type="submission" date="1997-07" db="EMBL/GenBank/DDBJ databases">
        <title>A new two P domain potassium channel subfamily from mouse excitable tissues.</title>
        <authorList>
            <person name="Lopes C.M.B."/>
            <person name="Buck M."/>
            <person name="Goldstein S.A.N."/>
        </authorList>
    </citation>
    <scope>NUCLEOTIDE SEQUENCE OF 15-307</scope>
    <source>
        <tissue>Brain</tissue>
    </source>
</reference>
<keyword id="KW-0325">Glycoprotein</keyword>
<keyword id="KW-0407">Ion channel</keyword>
<keyword id="KW-0406">Ion transport</keyword>
<keyword id="KW-0472">Membrane</keyword>
<keyword id="KW-0630">Potassium</keyword>
<keyword id="KW-0631">Potassium channel</keyword>
<keyword id="KW-0633">Potassium transport</keyword>
<keyword id="KW-1185">Reference proteome</keyword>
<keyword id="KW-0812">Transmembrane</keyword>
<keyword id="KW-1133">Transmembrane helix</keyword>
<keyword id="KW-0813">Transport</keyword>
<keyword id="KW-0851">Voltage-gated channel</keyword>
<protein>
    <recommendedName>
        <fullName>Potassium channel subfamily K member 7</fullName>
    </recommendedName>
    <alternativeName>
        <fullName>Double-pore K(+) channel 3</fullName>
    </alternativeName>
    <alternativeName>
        <fullName>Neuromuscular two p domain potassium channel</fullName>
    </alternativeName>
    <alternativeName>
        <fullName>Putative potassium channel DP3</fullName>
    </alternativeName>
</protein>
<accession>Q9Z2T1</accession>
<accession>Q9QXY0</accession>
<accession>Q9QYE8</accession>
<accession>Q9R1V1</accession>
<accession>Q9R242</accession>
<feature type="chain" id="PRO_0000101752" description="Potassium channel subfamily K member 7">
    <location>
        <begin position="1"/>
        <end position="307"/>
    </location>
</feature>
<feature type="topological domain" description="Cytoplasmic" evidence="1">
    <location>
        <begin position="1"/>
        <end position="10"/>
    </location>
</feature>
<feature type="transmembrane region" description="Helical" evidence="1">
    <location>
        <begin position="11"/>
        <end position="31"/>
    </location>
</feature>
<feature type="intramembrane region" description="Pore-forming; Name=Pore-forming 1" evidence="1">
    <location>
        <begin position="92"/>
        <end position="118"/>
    </location>
</feature>
<feature type="transmembrane region" description="Helical" evidence="1">
    <location>
        <begin position="120"/>
        <end position="140"/>
    </location>
</feature>
<feature type="topological domain" description="Cytoplasmic" evidence="1">
    <location>
        <begin position="141"/>
        <end position="172"/>
    </location>
</feature>
<feature type="transmembrane region" description="Helical" evidence="1">
    <location>
        <begin position="173"/>
        <end position="193"/>
    </location>
</feature>
<feature type="intramembrane region" description="Pore-forming; Name=Pore-forming 2" evidence="1">
    <location>
        <begin position="199"/>
        <end position="227"/>
    </location>
</feature>
<feature type="transmembrane region" description="Helical" evidence="1">
    <location>
        <begin position="233"/>
        <end position="253"/>
    </location>
</feature>
<feature type="topological domain" description="Cytoplasmic" evidence="1">
    <location>
        <begin position="254"/>
        <end position="307"/>
    </location>
</feature>
<feature type="glycosylation site" description="N-linked (GlcNAc...) asparagine" evidence="1">
    <location>
        <position position="83"/>
    </location>
</feature>
<feature type="sequence conflict" description="In Ref. 2." evidence="2" ref="2">
    <original>MGS</original>
    <variation>MTHSREFGPRGQEFGTR</variation>
    <location>
        <begin position="1"/>
        <end position="3"/>
    </location>
</feature>
<feature type="sequence conflict" description="In Ref. 4." evidence="2" ref="4">
    <original>GS</original>
    <variation>TR</variation>
    <location>
        <begin position="2"/>
        <end position="3"/>
    </location>
</feature>
<feature type="sequence conflict" description="In Ref. 1; AAD29577." evidence="2" ref="1">
    <original>S</original>
    <variation>G</variation>
    <location>
        <position position="84"/>
    </location>
</feature>
<feature type="sequence conflict" description="In Ref. 2; BAA35074." evidence="2" ref="2">
    <original>YH</original>
    <variation>SP</variation>
    <location>
        <begin position="231"/>
        <end position="232"/>
    </location>
</feature>
<feature type="sequence conflict" description="In Ref. 2; BAA35074." evidence="2" ref="2">
    <original>T</original>
    <variation>P</variation>
    <location>
        <position position="293"/>
    </location>
</feature>
<gene>
    <name type="primary">Kcnk7</name>
    <name type="synonym">Dpkch3</name>
    <name type="synonym">Kcnk6</name>
    <name type="synonym">Kcnk8</name>
    <name type="synonym">Knot1</name>
</gene>
<evidence type="ECO:0000255" key="1"/>
<evidence type="ECO:0000305" key="2"/>
<proteinExistence type="evidence at transcript level"/>
<organism>
    <name type="scientific">Mus musculus</name>
    <name type="common">Mouse</name>
    <dbReference type="NCBI Taxonomy" id="10090"/>
    <lineage>
        <taxon>Eukaryota</taxon>
        <taxon>Metazoa</taxon>
        <taxon>Chordata</taxon>
        <taxon>Craniata</taxon>
        <taxon>Vertebrata</taxon>
        <taxon>Euteleostomi</taxon>
        <taxon>Mammalia</taxon>
        <taxon>Eutheria</taxon>
        <taxon>Euarchontoglires</taxon>
        <taxon>Glires</taxon>
        <taxon>Rodentia</taxon>
        <taxon>Myomorpha</taxon>
        <taxon>Muroidea</taxon>
        <taxon>Muridae</taxon>
        <taxon>Murinae</taxon>
        <taxon>Mus</taxon>
        <taxon>Mus</taxon>
    </lineage>
</organism>